<evidence type="ECO:0000250" key="1">
    <source>
        <dbReference type="UniProtKB" id="Q8AW92"/>
    </source>
</evidence>
<evidence type="ECO:0000255" key="2">
    <source>
        <dbReference type="PROSITE-ProRule" id="PRU00125"/>
    </source>
</evidence>
<evidence type="ECO:0000256" key="3">
    <source>
        <dbReference type="SAM" id="MobiDB-lite"/>
    </source>
</evidence>
<evidence type="ECO:0000312" key="4">
    <source>
        <dbReference type="EMBL" id="AAH90104.1"/>
    </source>
</evidence>
<name>LMO41_XENTR</name>
<gene>
    <name type="primary">lmo4.1</name>
    <name evidence="4" type="synonym">lmo4</name>
</gene>
<feature type="chain" id="PRO_0000317223" description="LIM domain transcription factor LMO4.1">
    <location>
        <begin position="1"/>
        <end position="167"/>
    </location>
</feature>
<feature type="domain" description="LIM zinc-binding 1" evidence="2">
    <location>
        <begin position="22"/>
        <end position="84"/>
    </location>
</feature>
<feature type="domain" description="LIM zinc-binding 2" evidence="2">
    <location>
        <begin position="86"/>
        <end position="148"/>
    </location>
</feature>
<feature type="region of interest" description="Disordered" evidence="3">
    <location>
        <begin position="1"/>
        <end position="20"/>
    </location>
</feature>
<feature type="compositionally biased region" description="Polar residues" evidence="3">
    <location>
        <begin position="1"/>
        <end position="17"/>
    </location>
</feature>
<keyword id="KW-0217">Developmental protein</keyword>
<keyword id="KW-0221">Differentiation</keyword>
<keyword id="KW-0306">Gastrulation</keyword>
<keyword id="KW-0440">LIM domain</keyword>
<keyword id="KW-0479">Metal-binding</keyword>
<keyword id="KW-0524">Neurogenesis</keyword>
<keyword id="KW-1185">Reference proteome</keyword>
<keyword id="KW-0677">Repeat</keyword>
<keyword id="KW-0804">Transcription</keyword>
<keyword id="KW-0805">Transcription regulation</keyword>
<keyword id="KW-0862">Zinc</keyword>
<accession>Q5FVB2</accession>
<protein>
    <recommendedName>
        <fullName>LIM domain transcription factor LMO4.1</fullName>
    </recommendedName>
    <alternativeName>
        <fullName>LIM domain only protein 4.1</fullName>
        <shortName>LMO-4.1</shortName>
    </alternativeName>
</protein>
<reference evidence="4" key="1">
    <citation type="submission" date="2005-02" db="EMBL/GenBank/DDBJ databases">
        <authorList>
            <consortium name="NIH - Xenopus Gene Collection (XGC) project"/>
        </authorList>
    </citation>
    <scope>NUCLEOTIDE SEQUENCE [LARGE SCALE MRNA]</scope>
    <source>
        <tissue evidence="4">Gastrula</tissue>
    </source>
</reference>
<proteinExistence type="evidence at transcript level"/>
<comment type="function">
    <text evidence="1">Acts as a positive cofactor of GATA transcription factors to establish the identity of the ventral mesoderm during gastrulation. Down-regulation in the dorsal mesoderm is necessary for the proper formation of this territory since, when present, lmo4 may bind ldb1 and restrict the availability of this cofactor for Spemman organizer transcription factors. At neurula stages, suppresses primary neuron differentiation and modulates gene expression at the Isthmic Organizer of the midbrain-hindbrain boundary (By similarity).</text>
</comment>
<organism>
    <name type="scientific">Xenopus tropicalis</name>
    <name type="common">Western clawed frog</name>
    <name type="synonym">Silurana tropicalis</name>
    <dbReference type="NCBI Taxonomy" id="8364"/>
    <lineage>
        <taxon>Eukaryota</taxon>
        <taxon>Metazoa</taxon>
        <taxon>Chordata</taxon>
        <taxon>Craniata</taxon>
        <taxon>Vertebrata</taxon>
        <taxon>Euteleostomi</taxon>
        <taxon>Amphibia</taxon>
        <taxon>Batrachia</taxon>
        <taxon>Anura</taxon>
        <taxon>Pipoidea</taxon>
        <taxon>Pipidae</taxon>
        <taxon>Xenopodinae</taxon>
        <taxon>Xenopus</taxon>
        <taxon>Silurana</taxon>
    </lineage>
</organism>
<sequence>MVNNRVTESTTTAVSSNGGPPKACAGCGGKIADRFLLYSMERYWHTRCLKCSCCQAQLGEIGTSCYTKSGMILCRNDYIRLFGSSGACSACGQSIPASEMVMRAQGSVYHLKCFTCATCRNRLVPGDRFHYVNGAIFCEHDRPTGLLSGHLNPLQSNPPMLPDQKVC</sequence>
<dbReference type="EMBL" id="BC090104">
    <property type="protein sequence ID" value="AAH90104.1"/>
    <property type="molecule type" value="mRNA"/>
</dbReference>
<dbReference type="RefSeq" id="NP_001015822.1">
    <property type="nucleotide sequence ID" value="NM_001015822.1"/>
</dbReference>
<dbReference type="SMR" id="Q5FVB2"/>
<dbReference type="STRING" id="8364.ENSXETP00000001164"/>
<dbReference type="PaxDb" id="8364-ENSXETP00000050669"/>
<dbReference type="DNASU" id="548539"/>
<dbReference type="GeneID" id="548539"/>
<dbReference type="KEGG" id="xtr:548539"/>
<dbReference type="AGR" id="Xenbase:XB-GENE-479327"/>
<dbReference type="CTD" id="548539"/>
<dbReference type="Xenbase" id="XB-GENE-479327">
    <property type="gene designation" value="lmo4.2"/>
</dbReference>
<dbReference type="eggNOG" id="KOG0490">
    <property type="taxonomic scope" value="Eukaryota"/>
</dbReference>
<dbReference type="HOGENOM" id="CLU_001357_7_1_1"/>
<dbReference type="InParanoid" id="Q5FVB2"/>
<dbReference type="OMA" id="ALEAFWH"/>
<dbReference type="OrthoDB" id="6352355at2759"/>
<dbReference type="PhylomeDB" id="Q5FVB2"/>
<dbReference type="TreeFam" id="TF351071"/>
<dbReference type="Proteomes" id="UP000008143">
    <property type="component" value="Chromosome 8"/>
</dbReference>
<dbReference type="GO" id="GO:0046872">
    <property type="term" value="F:metal ion binding"/>
    <property type="evidence" value="ECO:0007669"/>
    <property type="project" value="UniProtKB-KW"/>
</dbReference>
<dbReference type="GO" id="GO:0003712">
    <property type="term" value="F:transcription coregulator activity"/>
    <property type="evidence" value="ECO:0000250"/>
    <property type="project" value="UniProtKB"/>
</dbReference>
<dbReference type="GO" id="GO:0030154">
    <property type="term" value="P:cell differentiation"/>
    <property type="evidence" value="ECO:0007669"/>
    <property type="project" value="UniProtKB-KW"/>
</dbReference>
<dbReference type="GO" id="GO:0007369">
    <property type="term" value="P:gastrulation"/>
    <property type="evidence" value="ECO:0007669"/>
    <property type="project" value="UniProtKB-KW"/>
</dbReference>
<dbReference type="GO" id="GO:0007498">
    <property type="term" value="P:mesoderm development"/>
    <property type="evidence" value="ECO:0000250"/>
    <property type="project" value="UniProtKB"/>
</dbReference>
<dbReference type="GO" id="GO:0045665">
    <property type="term" value="P:negative regulation of neuron differentiation"/>
    <property type="evidence" value="ECO:0000250"/>
    <property type="project" value="UniProtKB"/>
</dbReference>
<dbReference type="GO" id="GO:0007399">
    <property type="term" value="P:nervous system development"/>
    <property type="evidence" value="ECO:0007669"/>
    <property type="project" value="UniProtKB-KW"/>
</dbReference>
<dbReference type="GO" id="GO:0045944">
    <property type="term" value="P:positive regulation of transcription by RNA polymerase II"/>
    <property type="evidence" value="ECO:0000250"/>
    <property type="project" value="UniProtKB"/>
</dbReference>
<dbReference type="CDD" id="cd09386">
    <property type="entry name" value="LIM1_LMO4"/>
    <property type="match status" value="1"/>
</dbReference>
<dbReference type="CDD" id="cd09387">
    <property type="entry name" value="LIM2_LMO4"/>
    <property type="match status" value="1"/>
</dbReference>
<dbReference type="FunFam" id="2.10.110.10:FF:000015">
    <property type="entry name" value="LIM domain only 3"/>
    <property type="match status" value="1"/>
</dbReference>
<dbReference type="FunFam" id="2.10.110.10:FF:000051">
    <property type="entry name" value="LIM domain transcription factor LMO4"/>
    <property type="match status" value="1"/>
</dbReference>
<dbReference type="Gene3D" id="2.10.110.10">
    <property type="entry name" value="Cysteine Rich Protein"/>
    <property type="match status" value="2"/>
</dbReference>
<dbReference type="InterPro" id="IPR050945">
    <property type="entry name" value="LMO_RBTN_TF"/>
</dbReference>
<dbReference type="InterPro" id="IPR001781">
    <property type="entry name" value="Znf_LIM"/>
</dbReference>
<dbReference type="PANTHER" id="PTHR45787">
    <property type="entry name" value="LD11652P"/>
    <property type="match status" value="1"/>
</dbReference>
<dbReference type="PANTHER" id="PTHR45787:SF8">
    <property type="entry name" value="LIM DOMAIN ONLY 4-RELATED"/>
    <property type="match status" value="1"/>
</dbReference>
<dbReference type="Pfam" id="PF00412">
    <property type="entry name" value="LIM"/>
    <property type="match status" value="2"/>
</dbReference>
<dbReference type="SMART" id="SM00132">
    <property type="entry name" value="LIM"/>
    <property type="match status" value="2"/>
</dbReference>
<dbReference type="SUPFAM" id="SSF57716">
    <property type="entry name" value="Glucocorticoid receptor-like (DNA-binding domain)"/>
    <property type="match status" value="4"/>
</dbReference>
<dbReference type="PROSITE" id="PS00478">
    <property type="entry name" value="LIM_DOMAIN_1"/>
    <property type="match status" value="2"/>
</dbReference>
<dbReference type="PROSITE" id="PS50023">
    <property type="entry name" value="LIM_DOMAIN_2"/>
    <property type="match status" value="2"/>
</dbReference>